<reference key="1">
    <citation type="submission" date="2006-04" db="EMBL/GenBank/DDBJ databases">
        <authorList>
            <consortium name="NIH - Mammalian Gene Collection (MGC) project"/>
        </authorList>
    </citation>
    <scope>NUCLEOTIDE SEQUENCE [LARGE SCALE MRNA]</scope>
    <source>
        <strain>Hereford</strain>
        <tissue>Fetal pons</tissue>
    </source>
</reference>
<name>RPAC2_BOVIN</name>
<sequence length="133" mass="15182">MEEDQELERKMSGVKTSMAEGERKTALEMVQAAGTDRHCVTFVLHEEDHTLGNSLRYMIMKNPEVEFCGYTTTHPSESKINLRIQTRGALPAVEPFQRGLTDLMNVCQHVLDKFEASIKEYKDQKASRNEATF</sequence>
<comment type="function">
    <text evidence="1 2">DNA-dependent RNA polymerase catalyzes the transcription of DNA into RNA using the four ribonucleoside triphosphates as substrates. Common component of RNA polymerases I and III which synthesize ribosomal RNA precursor pre-rRNA and short non-coding RNAs including 5S rRNA, snRNAs, tRNAs and miRNAs, respectively.</text>
</comment>
<comment type="subunit">
    <text evidence="1">Component of the RNA polymerase I and RNA polymerase III complexes consisting of at least 13 and 17 subunits, respectively. The transcriptionally active RNA polymerase III complex consists of a ten-subunit horseshoe-shaped catalytic core composed of POLR3A/RPC1, POLR3B/RPC2, POLR1C/RPAC1, POLR1D/RPAC2, POLR3K/RPC10, POLR2E/RPABC1, POLR2F/RPABC2, POLR2H/RPABC3, POLR2K/RPABC4 and POLR2L/RPABC5; a mobile stalk composed of two subunits POLR3H/RPC8 and CRCP/RPC9, protruding from the core and functioning primarily in transcription initiation; and additional subunits homologous to general transcription factors of the RNA polymerase II machinery, POLR3C/RPC3-POLR3F/RPC6-POLR3G/RPC7 heterotrimer required for transcription initiation and POLR3D/RPC4-POLR3E/RPC5 heterodimer involved in both transcription initiation and termination.</text>
</comment>
<comment type="subcellular location">
    <subcellularLocation>
        <location evidence="1">Nucleus</location>
    </subcellularLocation>
</comment>
<comment type="similarity">
    <text evidence="4">Belongs to the archaeal Rpo11/eukaryotic RPB11/RPC19 RNA polymerase subunit family.</text>
</comment>
<protein>
    <recommendedName>
        <fullName>DNA-directed RNA polymerases I and III subunit RPAC2</fullName>
        <shortName>RNA polymerases I and III subunit AC2</shortName>
    </recommendedName>
    <alternativeName>
        <fullName>DNA-directed RNA polymerase I subunit D</fullName>
    </alternativeName>
</protein>
<gene>
    <name type="primary">POLR1D</name>
</gene>
<organism>
    <name type="scientific">Bos taurus</name>
    <name type="common">Bovine</name>
    <dbReference type="NCBI Taxonomy" id="9913"/>
    <lineage>
        <taxon>Eukaryota</taxon>
        <taxon>Metazoa</taxon>
        <taxon>Chordata</taxon>
        <taxon>Craniata</taxon>
        <taxon>Vertebrata</taxon>
        <taxon>Euteleostomi</taxon>
        <taxon>Mammalia</taxon>
        <taxon>Eutheria</taxon>
        <taxon>Laurasiatheria</taxon>
        <taxon>Artiodactyla</taxon>
        <taxon>Ruminantia</taxon>
        <taxon>Pecora</taxon>
        <taxon>Bovidae</taxon>
        <taxon>Bovinae</taxon>
        <taxon>Bos</taxon>
    </lineage>
</organism>
<dbReference type="EMBL" id="BC114905">
    <property type="protein sequence ID" value="AAI14906.1"/>
    <property type="molecule type" value="mRNA"/>
</dbReference>
<dbReference type="RefSeq" id="NP_001069612.1">
    <property type="nucleotide sequence ID" value="NM_001076144.2"/>
</dbReference>
<dbReference type="SMR" id="Q1RMG8"/>
<dbReference type="FunCoup" id="Q1RMG8">
    <property type="interactions" value="2117"/>
</dbReference>
<dbReference type="STRING" id="9913.ENSBTAP00000044471"/>
<dbReference type="PaxDb" id="9913-ENSBTAP00000044471"/>
<dbReference type="Ensembl" id="ENSBTAT00000047251.5">
    <property type="protein sequence ID" value="ENSBTAP00000044471.3"/>
    <property type="gene ID" value="ENSBTAG00000008642.7"/>
</dbReference>
<dbReference type="GeneID" id="539061"/>
<dbReference type="KEGG" id="bta:539061"/>
<dbReference type="CTD" id="51082"/>
<dbReference type="VEuPathDB" id="HostDB:ENSBTAG00000008642"/>
<dbReference type="VEuPathDB" id="HostDB:ENSBTAG00000033252"/>
<dbReference type="eggNOG" id="KOG3438">
    <property type="taxonomic scope" value="Eukaryota"/>
</dbReference>
<dbReference type="GeneTree" id="ENSGT00550000075160"/>
<dbReference type="HOGENOM" id="CLU_090381_4_1_1"/>
<dbReference type="InParanoid" id="Q1RMG8"/>
<dbReference type="OMA" id="MRIQMYD"/>
<dbReference type="OrthoDB" id="510325at2759"/>
<dbReference type="TreeFam" id="TF103035"/>
<dbReference type="Proteomes" id="UP000009136">
    <property type="component" value="Chromosome 12"/>
</dbReference>
<dbReference type="Bgee" id="ENSBTAG00000008642">
    <property type="expression patterns" value="Expressed in digestive system secreted substance and 102 other cell types or tissues"/>
</dbReference>
<dbReference type="GO" id="GO:0005736">
    <property type="term" value="C:RNA polymerase I complex"/>
    <property type="evidence" value="ECO:0000318"/>
    <property type="project" value="GO_Central"/>
</dbReference>
<dbReference type="GO" id="GO:0005666">
    <property type="term" value="C:RNA polymerase III complex"/>
    <property type="evidence" value="ECO:0000318"/>
    <property type="project" value="GO_Central"/>
</dbReference>
<dbReference type="GO" id="GO:0003677">
    <property type="term" value="F:DNA binding"/>
    <property type="evidence" value="ECO:0007669"/>
    <property type="project" value="InterPro"/>
</dbReference>
<dbReference type="GO" id="GO:0003899">
    <property type="term" value="F:DNA-directed RNA polymerase activity"/>
    <property type="evidence" value="ECO:0007669"/>
    <property type="project" value="InterPro"/>
</dbReference>
<dbReference type="GO" id="GO:0046983">
    <property type="term" value="F:protein dimerization activity"/>
    <property type="evidence" value="ECO:0007669"/>
    <property type="project" value="InterPro"/>
</dbReference>
<dbReference type="GO" id="GO:0006383">
    <property type="term" value="P:transcription by RNA polymerase III"/>
    <property type="evidence" value="ECO:0000318"/>
    <property type="project" value="GO_Central"/>
</dbReference>
<dbReference type="GO" id="GO:0006362">
    <property type="term" value="P:transcription elongation by RNA polymerase I"/>
    <property type="evidence" value="ECO:0000318"/>
    <property type="project" value="GO_Central"/>
</dbReference>
<dbReference type="CDD" id="cd07029">
    <property type="entry name" value="RNAP_I_III_AC19"/>
    <property type="match status" value="1"/>
</dbReference>
<dbReference type="FunFam" id="3.30.1360.10:FF:000006">
    <property type="entry name" value="DNA-directed RNA polymerases I and III subunit RPAC2"/>
    <property type="match status" value="1"/>
</dbReference>
<dbReference type="Gene3D" id="3.30.1360.10">
    <property type="entry name" value="RNA polymerase, RBP11-like subunit"/>
    <property type="match status" value="1"/>
</dbReference>
<dbReference type="HAMAP" id="MF_00261">
    <property type="entry name" value="RNApol_arch_Rpo11"/>
    <property type="match status" value="1"/>
</dbReference>
<dbReference type="InterPro" id="IPR036603">
    <property type="entry name" value="RBP11-like"/>
</dbReference>
<dbReference type="InterPro" id="IPR009025">
    <property type="entry name" value="RBP11-like_dimer"/>
</dbReference>
<dbReference type="InterPro" id="IPR008193">
    <property type="entry name" value="RNA_pol_Rpb11_13-16kDa_CS"/>
</dbReference>
<dbReference type="InterPro" id="IPR033898">
    <property type="entry name" value="RNAP_AC19"/>
</dbReference>
<dbReference type="InterPro" id="IPR022905">
    <property type="entry name" value="Rpo11-like"/>
</dbReference>
<dbReference type="PANTHER" id="PTHR13946">
    <property type="entry name" value="DNA-DIRECTED RNA POLYMERASE I,II,III"/>
    <property type="match status" value="1"/>
</dbReference>
<dbReference type="PANTHER" id="PTHR13946:SF28">
    <property type="entry name" value="DNA-DIRECTED RNA POLYMERASES I AND III SUBUNIT RPAC2"/>
    <property type="match status" value="1"/>
</dbReference>
<dbReference type="Pfam" id="PF13656">
    <property type="entry name" value="RNA_pol_L_2"/>
    <property type="match status" value="1"/>
</dbReference>
<dbReference type="SUPFAM" id="SSF55257">
    <property type="entry name" value="RBP11-like subunits of RNA polymerase"/>
    <property type="match status" value="1"/>
</dbReference>
<dbReference type="PROSITE" id="PS01154">
    <property type="entry name" value="RNA_POL_L_13KD"/>
    <property type="match status" value="1"/>
</dbReference>
<proteinExistence type="evidence at transcript level"/>
<accession>Q1RMG8</accession>
<keyword id="KW-0007">Acetylation</keyword>
<keyword id="KW-0240">DNA-directed RNA polymerase</keyword>
<keyword id="KW-0539">Nucleus</keyword>
<keyword id="KW-1185">Reference proteome</keyword>
<keyword id="KW-0804">Transcription</keyword>
<evidence type="ECO:0000250" key="1">
    <source>
        <dbReference type="UniProtKB" id="P0DPB6"/>
    </source>
</evidence>
<evidence type="ECO:0000250" key="2">
    <source>
        <dbReference type="UniProtKB" id="P28000"/>
    </source>
</evidence>
<evidence type="ECO:0000256" key="3">
    <source>
        <dbReference type="SAM" id="MobiDB-lite"/>
    </source>
</evidence>
<evidence type="ECO:0000305" key="4"/>
<feature type="chain" id="PRO_0000291379" description="DNA-directed RNA polymerases I and III subunit RPAC2">
    <location>
        <begin position="1"/>
        <end position="133"/>
    </location>
</feature>
<feature type="region of interest" description="Disordered" evidence="3">
    <location>
        <begin position="1"/>
        <end position="22"/>
    </location>
</feature>
<feature type="modified residue" description="N-acetylmethionine" evidence="1">
    <location>
        <position position="1"/>
    </location>
</feature>